<gene>
    <name evidence="2" type="primary">infB</name>
    <name type="ordered locus">CHAB381_1679</name>
</gene>
<comment type="function">
    <text evidence="2">One of the essential components for the initiation of protein synthesis. Protects formylmethionyl-tRNA from spontaneous hydrolysis and promotes its binding to the 30S ribosomal subunits. Also involved in the hydrolysis of GTP during the formation of the 70S ribosomal complex.</text>
</comment>
<comment type="subcellular location">
    <subcellularLocation>
        <location evidence="2">Cytoplasm</location>
    </subcellularLocation>
</comment>
<comment type="similarity">
    <text evidence="2">Belongs to the TRAFAC class translation factor GTPase superfamily. Classic translation factor GTPase family. IF-2 subfamily.</text>
</comment>
<keyword id="KW-0963">Cytoplasm</keyword>
<keyword id="KW-0342">GTP-binding</keyword>
<keyword id="KW-0396">Initiation factor</keyword>
<keyword id="KW-0547">Nucleotide-binding</keyword>
<keyword id="KW-0648">Protein biosynthesis</keyword>
<keyword id="KW-1185">Reference proteome</keyword>
<reference key="1">
    <citation type="submission" date="2007-07" db="EMBL/GenBank/DDBJ databases">
        <title>Complete genome sequence of Campylobacter hominis ATCC BAA-381, a commensal isolated from the human gastrointestinal tract.</title>
        <authorList>
            <person name="Fouts D.E."/>
            <person name="Mongodin E.F."/>
            <person name="Puiu D."/>
            <person name="Sebastian Y."/>
            <person name="Miller W.G."/>
            <person name="Mandrell R.E."/>
            <person name="Nelson K.E."/>
        </authorList>
    </citation>
    <scope>NUCLEOTIDE SEQUENCE [LARGE SCALE GENOMIC DNA]</scope>
    <source>
        <strain>ATCC BAA-381 / DSM 21671 / CCUG 45161 / LMG 19568 / NCTC 13146 / CH001A</strain>
    </source>
</reference>
<protein>
    <recommendedName>
        <fullName evidence="2">Translation initiation factor IF-2</fullName>
    </recommendedName>
</protein>
<evidence type="ECO:0000250" key="1"/>
<evidence type="ECO:0000255" key="2">
    <source>
        <dbReference type="HAMAP-Rule" id="MF_00100"/>
    </source>
</evidence>
<evidence type="ECO:0000256" key="3">
    <source>
        <dbReference type="SAM" id="MobiDB-lite"/>
    </source>
</evidence>
<organism>
    <name type="scientific">Campylobacter hominis (strain ATCC BAA-381 / DSM 21671 / CCUG 45161 / LMG 19568 / NCTC 13146 / CH001A)</name>
    <dbReference type="NCBI Taxonomy" id="360107"/>
    <lineage>
        <taxon>Bacteria</taxon>
        <taxon>Pseudomonadati</taxon>
        <taxon>Campylobacterota</taxon>
        <taxon>Epsilonproteobacteria</taxon>
        <taxon>Campylobacterales</taxon>
        <taxon>Campylobacteraceae</taxon>
        <taxon>Campylobacter</taxon>
    </lineage>
</organism>
<name>IF2_CAMHC</name>
<dbReference type="EMBL" id="CP000776">
    <property type="protein sequence ID" value="ABS50985.1"/>
    <property type="molecule type" value="Genomic_DNA"/>
</dbReference>
<dbReference type="RefSeq" id="WP_012109497.1">
    <property type="nucleotide sequence ID" value="NC_009714.1"/>
</dbReference>
<dbReference type="SMR" id="A7I3V0"/>
<dbReference type="STRING" id="360107.CHAB381_1679"/>
<dbReference type="KEGG" id="cha:CHAB381_1679"/>
<dbReference type="eggNOG" id="COG0532">
    <property type="taxonomic scope" value="Bacteria"/>
</dbReference>
<dbReference type="HOGENOM" id="CLU_006301_4_1_7"/>
<dbReference type="OrthoDB" id="9811804at2"/>
<dbReference type="Proteomes" id="UP000002407">
    <property type="component" value="Chromosome"/>
</dbReference>
<dbReference type="GO" id="GO:0005829">
    <property type="term" value="C:cytosol"/>
    <property type="evidence" value="ECO:0007669"/>
    <property type="project" value="TreeGrafter"/>
</dbReference>
<dbReference type="GO" id="GO:0005525">
    <property type="term" value="F:GTP binding"/>
    <property type="evidence" value="ECO:0007669"/>
    <property type="project" value="UniProtKB-KW"/>
</dbReference>
<dbReference type="GO" id="GO:0003924">
    <property type="term" value="F:GTPase activity"/>
    <property type="evidence" value="ECO:0007669"/>
    <property type="project" value="UniProtKB-UniRule"/>
</dbReference>
<dbReference type="GO" id="GO:0003743">
    <property type="term" value="F:translation initiation factor activity"/>
    <property type="evidence" value="ECO:0007669"/>
    <property type="project" value="UniProtKB-UniRule"/>
</dbReference>
<dbReference type="CDD" id="cd01887">
    <property type="entry name" value="IF2_eIF5B"/>
    <property type="match status" value="1"/>
</dbReference>
<dbReference type="CDD" id="cd03702">
    <property type="entry name" value="IF2_mtIF2_II"/>
    <property type="match status" value="1"/>
</dbReference>
<dbReference type="CDD" id="cd03692">
    <property type="entry name" value="mtIF2_IVc"/>
    <property type="match status" value="1"/>
</dbReference>
<dbReference type="FunFam" id="2.40.30.10:FF:000008">
    <property type="entry name" value="Translation initiation factor IF-2"/>
    <property type="match status" value="1"/>
</dbReference>
<dbReference type="FunFam" id="2.40.30.10:FF:000054">
    <property type="entry name" value="Translation initiation factor IF-2"/>
    <property type="match status" value="1"/>
</dbReference>
<dbReference type="FunFam" id="3.40.50.10050:FF:000001">
    <property type="entry name" value="Translation initiation factor IF-2"/>
    <property type="match status" value="1"/>
</dbReference>
<dbReference type="FunFam" id="3.40.50.300:FF:000019">
    <property type="entry name" value="Translation initiation factor IF-2"/>
    <property type="match status" value="1"/>
</dbReference>
<dbReference type="Gene3D" id="1.10.10.2480">
    <property type="match status" value="1"/>
</dbReference>
<dbReference type="Gene3D" id="3.40.50.300">
    <property type="entry name" value="P-loop containing nucleotide triphosphate hydrolases"/>
    <property type="match status" value="1"/>
</dbReference>
<dbReference type="Gene3D" id="2.40.30.10">
    <property type="entry name" value="Translation factors"/>
    <property type="match status" value="2"/>
</dbReference>
<dbReference type="Gene3D" id="3.40.50.10050">
    <property type="entry name" value="Translation initiation factor IF- 2, domain 3"/>
    <property type="match status" value="1"/>
</dbReference>
<dbReference type="HAMAP" id="MF_00100_B">
    <property type="entry name" value="IF_2_B"/>
    <property type="match status" value="1"/>
</dbReference>
<dbReference type="InterPro" id="IPR053905">
    <property type="entry name" value="EF-G-like_DII"/>
</dbReference>
<dbReference type="InterPro" id="IPR004161">
    <property type="entry name" value="EFTu-like_2"/>
</dbReference>
<dbReference type="InterPro" id="IPR044145">
    <property type="entry name" value="IF2_II"/>
</dbReference>
<dbReference type="InterPro" id="IPR006847">
    <property type="entry name" value="IF2_N"/>
</dbReference>
<dbReference type="InterPro" id="IPR027417">
    <property type="entry name" value="P-loop_NTPase"/>
</dbReference>
<dbReference type="InterPro" id="IPR005225">
    <property type="entry name" value="Small_GTP-bd"/>
</dbReference>
<dbReference type="InterPro" id="IPR000795">
    <property type="entry name" value="T_Tr_GTP-bd_dom"/>
</dbReference>
<dbReference type="InterPro" id="IPR000178">
    <property type="entry name" value="TF_IF2_bacterial-like"/>
</dbReference>
<dbReference type="InterPro" id="IPR015760">
    <property type="entry name" value="TIF_IF2"/>
</dbReference>
<dbReference type="InterPro" id="IPR023115">
    <property type="entry name" value="TIF_IF2_dom3"/>
</dbReference>
<dbReference type="InterPro" id="IPR036925">
    <property type="entry name" value="TIF_IF2_dom3_sf"/>
</dbReference>
<dbReference type="InterPro" id="IPR009000">
    <property type="entry name" value="Transl_B-barrel_sf"/>
</dbReference>
<dbReference type="NCBIfam" id="TIGR00487">
    <property type="entry name" value="IF-2"/>
    <property type="match status" value="1"/>
</dbReference>
<dbReference type="NCBIfam" id="TIGR00231">
    <property type="entry name" value="small_GTP"/>
    <property type="match status" value="1"/>
</dbReference>
<dbReference type="PANTHER" id="PTHR43381:SF5">
    <property type="entry name" value="TR-TYPE G DOMAIN-CONTAINING PROTEIN"/>
    <property type="match status" value="1"/>
</dbReference>
<dbReference type="PANTHER" id="PTHR43381">
    <property type="entry name" value="TRANSLATION INITIATION FACTOR IF-2-RELATED"/>
    <property type="match status" value="1"/>
</dbReference>
<dbReference type="Pfam" id="PF22042">
    <property type="entry name" value="EF-G_D2"/>
    <property type="match status" value="1"/>
</dbReference>
<dbReference type="Pfam" id="PF00009">
    <property type="entry name" value="GTP_EFTU"/>
    <property type="match status" value="1"/>
</dbReference>
<dbReference type="Pfam" id="PF03144">
    <property type="entry name" value="GTP_EFTU_D2"/>
    <property type="match status" value="1"/>
</dbReference>
<dbReference type="Pfam" id="PF11987">
    <property type="entry name" value="IF-2"/>
    <property type="match status" value="1"/>
</dbReference>
<dbReference type="Pfam" id="PF04760">
    <property type="entry name" value="IF2_N"/>
    <property type="match status" value="2"/>
</dbReference>
<dbReference type="PRINTS" id="PR00449">
    <property type="entry name" value="RASTRNSFRMNG"/>
</dbReference>
<dbReference type="SUPFAM" id="SSF52156">
    <property type="entry name" value="Initiation factor IF2/eIF5b, domain 3"/>
    <property type="match status" value="1"/>
</dbReference>
<dbReference type="SUPFAM" id="SSF52540">
    <property type="entry name" value="P-loop containing nucleoside triphosphate hydrolases"/>
    <property type="match status" value="1"/>
</dbReference>
<dbReference type="SUPFAM" id="SSF50447">
    <property type="entry name" value="Translation proteins"/>
    <property type="match status" value="2"/>
</dbReference>
<dbReference type="PROSITE" id="PS51722">
    <property type="entry name" value="G_TR_2"/>
    <property type="match status" value="1"/>
</dbReference>
<dbReference type="PROSITE" id="PS01176">
    <property type="entry name" value="IF2"/>
    <property type="match status" value="1"/>
</dbReference>
<accession>A7I3V0</accession>
<proteinExistence type="inferred from homology"/>
<sequence length="914" mass="100601">MGVRISQIADELGYTSQEVVAKAQEMGYKRIKTGSNSVSDEEASAIYDYIQTGVLPKKTEKKQTAKKSVKKDTVKKDTVKKTAVKKDDSKAAKKTKPIAKKSAPKTEKKVEKKVESKISKPDNEILEAKPEISKPEIKAEPKKEEIEQKQEAEPKIEVMPEKKSKIKSAFARGETLASESLKKRRGLVIVKKKKDLQTTETQKIEAPKTQKINLGLDAIFSNADANLKKKEKKKEKKQVQSKKVDTTKIDLTSDRELADIRIDDDEDMVVLPDLTLKPIQVEQKTKTKDQPNIYKVSQNKVYGNDGSIARGARKKHKKAVKNSDNEIIKSIEIPKEIRLYEFAEKIKKQPSEIISKLFALGLMTTKNDFLDEDAIEILGAEFDIDIKIVDENAKLNYVKVYDEQNLDDKNAVERVPVITIMGHVDHGKTSLLDYIRNSRIARGEAGGITQHVGAYMVEKNGRKITFIDTPGHEAFTSMRARGAEVTDIVIIVVAADDGVKPQTKEAINHAKAAKVPIIIAINKMDKPTANPDMVKSGLAELDIIPVEWGGKYEFVEISAKTGKGIEDLLEIVLLQADLLELKASLNVPAKATIIESSLQKGRGPVATIIVQNGTLRVGDTVVAGVAYGKVRVINDDKGKKLKDIKPGECGVIVGLSEVPEAGETLISVTSDKEAREYAKKIYEHNRQKELSKSTKVTIDELSAKIAEGEIKSLPVIVKADVVGSLEAVKSSLEKLRNDEVRVDIIHSGVGGITQNDVGLASASENCIILGFNIRPTGEVKELAKERGVNIKTYNVIYNLIDDVKAVLGGLMSPIISEIEIGQAEIRQVINVPKIGQIAGCMVTDGSIQRGAKIRVIREGVIKFEGNVSSLKRFKDDVKEVAKGFECGVGIEGYNDMQVGDFIESFKEKEEIASL</sequence>
<feature type="chain" id="PRO_0000335462" description="Translation initiation factor IF-2">
    <location>
        <begin position="1"/>
        <end position="914"/>
    </location>
</feature>
<feature type="domain" description="tr-type G">
    <location>
        <begin position="413"/>
        <end position="582"/>
    </location>
</feature>
<feature type="region of interest" description="Disordered" evidence="3">
    <location>
        <begin position="58"/>
        <end position="160"/>
    </location>
</feature>
<feature type="region of interest" description="G1" evidence="1">
    <location>
        <begin position="422"/>
        <end position="429"/>
    </location>
</feature>
<feature type="region of interest" description="G2" evidence="1">
    <location>
        <begin position="447"/>
        <end position="451"/>
    </location>
</feature>
<feature type="region of interest" description="G3" evidence="1">
    <location>
        <begin position="468"/>
        <end position="471"/>
    </location>
</feature>
<feature type="region of interest" description="G4" evidence="1">
    <location>
        <begin position="522"/>
        <end position="525"/>
    </location>
</feature>
<feature type="region of interest" description="G5" evidence="1">
    <location>
        <begin position="558"/>
        <end position="560"/>
    </location>
</feature>
<feature type="compositionally biased region" description="Basic and acidic residues" evidence="3">
    <location>
        <begin position="70"/>
        <end position="91"/>
    </location>
</feature>
<feature type="compositionally biased region" description="Basic residues" evidence="3">
    <location>
        <begin position="92"/>
        <end position="103"/>
    </location>
</feature>
<feature type="compositionally biased region" description="Basic and acidic residues" evidence="3">
    <location>
        <begin position="104"/>
        <end position="160"/>
    </location>
</feature>
<feature type="binding site" evidence="2">
    <location>
        <begin position="422"/>
        <end position="429"/>
    </location>
    <ligand>
        <name>GTP</name>
        <dbReference type="ChEBI" id="CHEBI:37565"/>
    </ligand>
</feature>
<feature type="binding site" evidence="2">
    <location>
        <begin position="468"/>
        <end position="472"/>
    </location>
    <ligand>
        <name>GTP</name>
        <dbReference type="ChEBI" id="CHEBI:37565"/>
    </ligand>
</feature>
<feature type="binding site" evidence="2">
    <location>
        <begin position="522"/>
        <end position="525"/>
    </location>
    <ligand>
        <name>GTP</name>
        <dbReference type="ChEBI" id="CHEBI:37565"/>
    </ligand>
</feature>